<comment type="similarity">
    <text evidence="1">Belongs to the UPF0246 family.</text>
</comment>
<sequence>MLILISPAKTLDYQSPLATTRYTQPELLDHSQQLIQQARQLSAPQISRLMGISDKLADLNATRFHDWQPHFTPDNARQAILAFKGDVYTGLQAETFNDADFDFAQQHLRMLSGLYGVLRPLDLMQPYRLEMGIRLENPRGKDLYQFWGDIITDKLNEALEAQGDRVVVNLASEEYFKSVKPKKLNAELIKPVFLDEKNGKFKVVSFYAKKARGLMSRFIIENRLTKPEQLTAFDREGYFFDEETSTQDELVFKRYEQ</sequence>
<protein>
    <recommendedName>
        <fullName evidence="1">UPF0246 protein YaaA</fullName>
    </recommendedName>
</protein>
<accession>B5R5H7</accession>
<name>YAAA_SALEP</name>
<feature type="chain" id="PRO_1000131138" description="UPF0246 protein YaaA">
    <location>
        <begin position="1"/>
        <end position="257"/>
    </location>
</feature>
<evidence type="ECO:0000255" key="1">
    <source>
        <dbReference type="HAMAP-Rule" id="MF_00652"/>
    </source>
</evidence>
<reference key="1">
    <citation type="journal article" date="2008" name="Genome Res.">
        <title>Comparative genome analysis of Salmonella enteritidis PT4 and Salmonella gallinarum 287/91 provides insights into evolutionary and host adaptation pathways.</title>
        <authorList>
            <person name="Thomson N.R."/>
            <person name="Clayton D.J."/>
            <person name="Windhorst D."/>
            <person name="Vernikos G."/>
            <person name="Davidson S."/>
            <person name="Churcher C."/>
            <person name="Quail M.A."/>
            <person name="Stevens M."/>
            <person name="Jones M.A."/>
            <person name="Watson M."/>
            <person name="Barron A."/>
            <person name="Layton A."/>
            <person name="Pickard D."/>
            <person name="Kingsley R.A."/>
            <person name="Bignell A."/>
            <person name="Clark L."/>
            <person name="Harris B."/>
            <person name="Ormond D."/>
            <person name="Abdellah Z."/>
            <person name="Brooks K."/>
            <person name="Cherevach I."/>
            <person name="Chillingworth T."/>
            <person name="Woodward J."/>
            <person name="Norberczak H."/>
            <person name="Lord A."/>
            <person name="Arrowsmith C."/>
            <person name="Jagels K."/>
            <person name="Moule S."/>
            <person name="Mungall K."/>
            <person name="Saunders M."/>
            <person name="Whitehead S."/>
            <person name="Chabalgoity J.A."/>
            <person name="Maskell D."/>
            <person name="Humphreys T."/>
            <person name="Roberts M."/>
            <person name="Barrow P.A."/>
            <person name="Dougan G."/>
            <person name="Parkhill J."/>
        </authorList>
    </citation>
    <scope>NUCLEOTIDE SEQUENCE [LARGE SCALE GENOMIC DNA]</scope>
    <source>
        <strain>P125109</strain>
    </source>
</reference>
<dbReference type="EMBL" id="AM933172">
    <property type="protein sequence ID" value="CAR31595.1"/>
    <property type="molecule type" value="Genomic_DNA"/>
</dbReference>
<dbReference type="RefSeq" id="WP_000906175.1">
    <property type="nucleotide sequence ID" value="NC_011294.1"/>
</dbReference>
<dbReference type="SMR" id="B5R5H7"/>
<dbReference type="KEGG" id="set:SEN0004"/>
<dbReference type="HOGENOM" id="CLU_061989_0_0_6"/>
<dbReference type="Proteomes" id="UP000000613">
    <property type="component" value="Chromosome"/>
</dbReference>
<dbReference type="GO" id="GO:0005829">
    <property type="term" value="C:cytosol"/>
    <property type="evidence" value="ECO:0007669"/>
    <property type="project" value="TreeGrafter"/>
</dbReference>
<dbReference type="GO" id="GO:0033194">
    <property type="term" value="P:response to hydroperoxide"/>
    <property type="evidence" value="ECO:0007669"/>
    <property type="project" value="TreeGrafter"/>
</dbReference>
<dbReference type="HAMAP" id="MF_00652">
    <property type="entry name" value="UPF0246"/>
    <property type="match status" value="1"/>
</dbReference>
<dbReference type="InterPro" id="IPR005583">
    <property type="entry name" value="YaaA"/>
</dbReference>
<dbReference type="NCBIfam" id="NF002541">
    <property type="entry name" value="PRK02101.1-1"/>
    <property type="match status" value="1"/>
</dbReference>
<dbReference type="NCBIfam" id="NF002542">
    <property type="entry name" value="PRK02101.1-3"/>
    <property type="match status" value="1"/>
</dbReference>
<dbReference type="PANTHER" id="PTHR30283:SF4">
    <property type="entry name" value="PEROXIDE STRESS RESISTANCE PROTEIN YAAA"/>
    <property type="match status" value="1"/>
</dbReference>
<dbReference type="PANTHER" id="PTHR30283">
    <property type="entry name" value="PEROXIDE STRESS RESPONSE PROTEIN YAAA"/>
    <property type="match status" value="1"/>
</dbReference>
<dbReference type="Pfam" id="PF03883">
    <property type="entry name" value="H2O2_YaaD"/>
    <property type="match status" value="1"/>
</dbReference>
<organism>
    <name type="scientific">Salmonella enteritidis PT4 (strain P125109)</name>
    <dbReference type="NCBI Taxonomy" id="550537"/>
    <lineage>
        <taxon>Bacteria</taxon>
        <taxon>Pseudomonadati</taxon>
        <taxon>Pseudomonadota</taxon>
        <taxon>Gammaproteobacteria</taxon>
        <taxon>Enterobacterales</taxon>
        <taxon>Enterobacteriaceae</taxon>
        <taxon>Salmonella</taxon>
    </lineage>
</organism>
<proteinExistence type="inferred from homology"/>
<gene>
    <name evidence="1" type="primary">yaaA</name>
    <name type="ordered locus">SEN0004</name>
</gene>